<evidence type="ECO:0000250" key="1">
    <source>
        <dbReference type="UniProtKB" id="P07740"/>
    </source>
</evidence>
<evidence type="ECO:0000269" key="2">
    <source>
    </source>
</evidence>
<evidence type="ECO:0000305" key="3"/>
<name>LUXA2_PHOLE</name>
<sequence>MKISNICFSYQPPGESHQEVMERFIRLGVASEELNFDGFYTLEHHFTEFGITGNLYIACANILGRTKRIQVGTMGIVLPTEHPARHVESLLVLDQLSKGRFNYGTVRGLYHKDFRVFGTSQEDSRKTAENFYSMILDASKTGVLHTDGEVVEFPDVNVYPEAYSKKQPTCMTAESSETITYLAERGLPMVLSWIIPVSEKVSQMELYNEVAAEHGHDINNIEHILTFICSVNEDGEKADSVCRNFLENWYDSYKNATNIFNDSNQTRGYDYLKAQWREWVMKGLADPRRRLDYSNELNPVGTPERCIEIIQSNIDATGIKHITVGFEANGSEQEIRESMELFMEKVAPHLKDPQ</sequence>
<gene>
    <name type="primary">luxA</name>
</gene>
<accession>P29238</accession>
<proteinExistence type="evidence at protein level"/>
<comment type="function">
    <text evidence="2">Light-emitting reaction in luminous bacteria.</text>
</comment>
<comment type="catalytic activity">
    <reaction evidence="2">
        <text>a long-chain fatty aldehyde + FMNH2 + O2 = a long-chain fatty acid + hnu + FMN + H2O + 2 H(+)</text>
        <dbReference type="Rhea" id="RHEA:17181"/>
        <dbReference type="ChEBI" id="CHEBI:15377"/>
        <dbReference type="ChEBI" id="CHEBI:15378"/>
        <dbReference type="ChEBI" id="CHEBI:15379"/>
        <dbReference type="ChEBI" id="CHEBI:17176"/>
        <dbReference type="ChEBI" id="CHEBI:30212"/>
        <dbReference type="ChEBI" id="CHEBI:57560"/>
        <dbReference type="ChEBI" id="CHEBI:57618"/>
        <dbReference type="ChEBI" id="CHEBI:58210"/>
        <dbReference type="EC" id="1.14.14.3"/>
    </reaction>
</comment>
<comment type="subunit">
    <text evidence="1">Heterodimer of an alpha and a beta chain.</text>
</comment>
<comment type="similarity">
    <text evidence="3">Belongs to the bacterial luciferase oxidoreductase family.</text>
</comment>
<reference key="1">
    <citation type="journal article" date="1991" name="Eur. J. Biochem.">
        <title>The lux genes of the luminous bacterial symbiont, Photobacterium leiognathi, of the ponyfish. Nucleotide sequence, difference in gene organization, and high expression in mutant Escherichia coli.</title>
        <authorList>
            <person name="Lee C.Y."/>
            <person name="Szittner R.B."/>
            <person name="Meighen E.A."/>
        </authorList>
    </citation>
    <scope>NUCLEOTIDE SEQUENCE [GENOMIC DNA]</scope>
    <scope>FUNCTION</scope>
    <scope>CATALYTIC ACTIVITY</scope>
    <source>
        <strain>ATCC 25521 / DSM 21260 / CCUG 16229 / CIP 66.5 / NCIMB 2193 / L1</strain>
    </source>
</reference>
<keyword id="KW-0285">Flavoprotein</keyword>
<keyword id="KW-0288">FMN</keyword>
<keyword id="KW-0455">Luminescence</keyword>
<keyword id="KW-0503">Monooxygenase</keyword>
<keyword id="KW-0560">Oxidoreductase</keyword>
<keyword id="KW-0599">Photoprotein</keyword>
<dbReference type="EC" id="1.14.14.3" evidence="2"/>
<dbReference type="EMBL" id="M63594">
    <property type="protein sequence ID" value="AAA25618.1"/>
    <property type="molecule type" value="Genomic_DNA"/>
</dbReference>
<dbReference type="PIR" id="S17953">
    <property type="entry name" value="S17953"/>
</dbReference>
<dbReference type="RefSeq" id="WP_023934905.1">
    <property type="nucleotide sequence ID" value="NZ_PYOJ01000031.1"/>
</dbReference>
<dbReference type="SMR" id="P29238"/>
<dbReference type="OrthoDB" id="7903015at2"/>
<dbReference type="GO" id="GO:0005829">
    <property type="term" value="C:cytosol"/>
    <property type="evidence" value="ECO:0007669"/>
    <property type="project" value="TreeGrafter"/>
</dbReference>
<dbReference type="GO" id="GO:0047646">
    <property type="term" value="F:alkanal monooxygenase (FMN-linked) activity"/>
    <property type="evidence" value="ECO:0007669"/>
    <property type="project" value="UniProtKB-EC"/>
</dbReference>
<dbReference type="GO" id="GO:0008218">
    <property type="term" value="P:bioluminescence"/>
    <property type="evidence" value="ECO:0007669"/>
    <property type="project" value="UniProtKB-KW"/>
</dbReference>
<dbReference type="CDD" id="cd01096">
    <property type="entry name" value="Alkanal_monooxygenase"/>
    <property type="match status" value="1"/>
</dbReference>
<dbReference type="Gene3D" id="3.20.20.30">
    <property type="entry name" value="Luciferase-like domain"/>
    <property type="match status" value="1"/>
</dbReference>
<dbReference type="InterPro" id="IPR033924">
    <property type="entry name" value="Alkanal_monooxygenase"/>
</dbReference>
<dbReference type="InterPro" id="IPR050766">
    <property type="entry name" value="Bact_Lucif_Oxidored"/>
</dbReference>
<dbReference type="InterPro" id="IPR018235">
    <property type="entry name" value="Bacterial_luciferase_CS"/>
</dbReference>
<dbReference type="InterPro" id="IPR011251">
    <property type="entry name" value="Luciferase-like_dom"/>
</dbReference>
<dbReference type="InterPro" id="IPR036661">
    <property type="entry name" value="Luciferase-like_sf"/>
</dbReference>
<dbReference type="InterPro" id="IPR002103">
    <property type="entry name" value="Luciferase_bac/NFP"/>
</dbReference>
<dbReference type="PANTHER" id="PTHR30137:SF8">
    <property type="entry name" value="BLR5498 PROTEIN"/>
    <property type="match status" value="1"/>
</dbReference>
<dbReference type="PANTHER" id="PTHR30137">
    <property type="entry name" value="LUCIFERASE-LIKE MONOOXYGENASE"/>
    <property type="match status" value="1"/>
</dbReference>
<dbReference type="Pfam" id="PF00296">
    <property type="entry name" value="Bac_luciferase"/>
    <property type="match status" value="1"/>
</dbReference>
<dbReference type="PRINTS" id="PR00089">
    <property type="entry name" value="LUCIFERASE"/>
</dbReference>
<dbReference type="SUPFAM" id="SSF51679">
    <property type="entry name" value="Bacterial luciferase-like"/>
    <property type="match status" value="1"/>
</dbReference>
<dbReference type="PROSITE" id="PS00494">
    <property type="entry name" value="BACTERIAL_LUCIFERASE"/>
    <property type="match status" value="1"/>
</dbReference>
<feature type="chain" id="PRO_0000220165" description="Alkanal monooxygenase alpha chain">
    <location>
        <begin position="1"/>
        <end position="354"/>
    </location>
</feature>
<organism>
    <name type="scientific">Photobacterium leiognathi</name>
    <dbReference type="NCBI Taxonomy" id="553611"/>
    <lineage>
        <taxon>Bacteria</taxon>
        <taxon>Pseudomonadati</taxon>
        <taxon>Pseudomonadota</taxon>
        <taxon>Gammaproteobacteria</taxon>
        <taxon>Vibrionales</taxon>
        <taxon>Vibrionaceae</taxon>
        <taxon>Photobacterium</taxon>
    </lineage>
</organism>
<protein>
    <recommendedName>
        <fullName>Alkanal monooxygenase alpha chain</fullName>
        <ecNumber evidence="2">1.14.14.3</ecNumber>
    </recommendedName>
    <alternativeName>
        <fullName>Bacterial luciferase alpha chain</fullName>
    </alternativeName>
</protein>